<organism>
    <name type="scientific">Burkholderia mallei (strain ATCC 23344)</name>
    <dbReference type="NCBI Taxonomy" id="243160"/>
    <lineage>
        <taxon>Bacteria</taxon>
        <taxon>Pseudomonadati</taxon>
        <taxon>Pseudomonadota</taxon>
        <taxon>Betaproteobacteria</taxon>
        <taxon>Burkholderiales</taxon>
        <taxon>Burkholderiaceae</taxon>
        <taxon>Burkholderia</taxon>
        <taxon>pseudomallei group</taxon>
    </lineage>
</organism>
<sequence length="332" mass="34364">MKVAVLGAGAWGTALAAHLAVRHDTLLWARDAALVAELAARRENARYLGGVALPPGLRYEADLATALSHAQADDALCVIAAPVAGLRALCRAMRDARRVPAHFVWVCKGFEADTRRLPHQMVAEELPDHASYGVLSGPSFAREVAQGLPVALTVASASAACRERTLAAFHHGAMRIYTGDDVVGVEVGGAVKNVLAIATGIADGLGLGLNARAALVTRGLAEMSRLGVALGGRAETFTGLTGLGDLILTATGDLSRNRSVGLQLAAGRSLDDILAALGHVAEGVRCARAVLSIARERGVDMPITEAVCAVLFDGVAPRDAVSGLLRRDAKAE</sequence>
<keyword id="KW-0963">Cytoplasm</keyword>
<keyword id="KW-0444">Lipid biosynthesis</keyword>
<keyword id="KW-0443">Lipid metabolism</keyword>
<keyword id="KW-0520">NAD</keyword>
<keyword id="KW-0521">NADP</keyword>
<keyword id="KW-0547">Nucleotide-binding</keyword>
<keyword id="KW-0560">Oxidoreductase</keyword>
<keyword id="KW-0594">Phospholipid biosynthesis</keyword>
<keyword id="KW-1208">Phospholipid metabolism</keyword>
<keyword id="KW-1185">Reference proteome</keyword>
<reference key="1">
    <citation type="journal article" date="2004" name="Proc. Natl. Acad. Sci. U.S.A.">
        <title>Structural flexibility in the Burkholderia mallei genome.</title>
        <authorList>
            <person name="Nierman W.C."/>
            <person name="DeShazer D."/>
            <person name="Kim H.S."/>
            <person name="Tettelin H."/>
            <person name="Nelson K.E."/>
            <person name="Feldblyum T.V."/>
            <person name="Ulrich R.L."/>
            <person name="Ronning C.M."/>
            <person name="Brinkac L.M."/>
            <person name="Daugherty S.C."/>
            <person name="Davidsen T.D."/>
            <person name="DeBoy R.T."/>
            <person name="Dimitrov G."/>
            <person name="Dodson R.J."/>
            <person name="Durkin A.S."/>
            <person name="Gwinn M.L."/>
            <person name="Haft D.H."/>
            <person name="Khouri H.M."/>
            <person name="Kolonay J.F."/>
            <person name="Madupu R."/>
            <person name="Mohammoud Y."/>
            <person name="Nelson W.C."/>
            <person name="Radune D."/>
            <person name="Romero C.M."/>
            <person name="Sarria S."/>
            <person name="Selengut J."/>
            <person name="Shamblin C."/>
            <person name="Sullivan S.A."/>
            <person name="White O."/>
            <person name="Yu Y."/>
            <person name="Zafar N."/>
            <person name="Zhou L."/>
            <person name="Fraser C.M."/>
        </authorList>
    </citation>
    <scope>NUCLEOTIDE SEQUENCE [LARGE SCALE GENOMIC DNA]</scope>
    <source>
        <strain>ATCC 23344</strain>
    </source>
</reference>
<proteinExistence type="inferred from homology"/>
<dbReference type="EC" id="1.1.1.94" evidence="1"/>
<dbReference type="EMBL" id="CP000010">
    <property type="protein sequence ID" value="AAU48538.1"/>
    <property type="molecule type" value="Genomic_DNA"/>
</dbReference>
<dbReference type="RefSeq" id="WP_004536061.1">
    <property type="nucleotide sequence ID" value="NC_006348.1"/>
</dbReference>
<dbReference type="RefSeq" id="YP_104680.1">
    <property type="nucleotide sequence ID" value="NC_006348.1"/>
</dbReference>
<dbReference type="SMR" id="Q62F47"/>
<dbReference type="KEGG" id="bma:BMA3204"/>
<dbReference type="PATRIC" id="fig|243160.12.peg.3281"/>
<dbReference type="eggNOG" id="COG0240">
    <property type="taxonomic scope" value="Bacteria"/>
</dbReference>
<dbReference type="HOGENOM" id="CLU_033449_0_2_4"/>
<dbReference type="UniPathway" id="UPA00940"/>
<dbReference type="Proteomes" id="UP000006693">
    <property type="component" value="Chromosome 1"/>
</dbReference>
<dbReference type="GO" id="GO:0005829">
    <property type="term" value="C:cytosol"/>
    <property type="evidence" value="ECO:0007669"/>
    <property type="project" value="TreeGrafter"/>
</dbReference>
<dbReference type="GO" id="GO:0047952">
    <property type="term" value="F:glycerol-3-phosphate dehydrogenase [NAD(P)+] activity"/>
    <property type="evidence" value="ECO:0007669"/>
    <property type="project" value="UniProtKB-UniRule"/>
</dbReference>
<dbReference type="GO" id="GO:0051287">
    <property type="term" value="F:NAD binding"/>
    <property type="evidence" value="ECO:0007669"/>
    <property type="project" value="InterPro"/>
</dbReference>
<dbReference type="GO" id="GO:0005975">
    <property type="term" value="P:carbohydrate metabolic process"/>
    <property type="evidence" value="ECO:0007669"/>
    <property type="project" value="InterPro"/>
</dbReference>
<dbReference type="GO" id="GO:0046167">
    <property type="term" value="P:glycerol-3-phosphate biosynthetic process"/>
    <property type="evidence" value="ECO:0007669"/>
    <property type="project" value="UniProtKB-UniRule"/>
</dbReference>
<dbReference type="GO" id="GO:0046168">
    <property type="term" value="P:glycerol-3-phosphate catabolic process"/>
    <property type="evidence" value="ECO:0007669"/>
    <property type="project" value="InterPro"/>
</dbReference>
<dbReference type="GO" id="GO:0006650">
    <property type="term" value="P:glycerophospholipid metabolic process"/>
    <property type="evidence" value="ECO:0007669"/>
    <property type="project" value="UniProtKB-UniRule"/>
</dbReference>
<dbReference type="GO" id="GO:0008654">
    <property type="term" value="P:phospholipid biosynthetic process"/>
    <property type="evidence" value="ECO:0007669"/>
    <property type="project" value="UniProtKB-KW"/>
</dbReference>
<dbReference type="FunFam" id="1.10.1040.10:FF:000001">
    <property type="entry name" value="Glycerol-3-phosphate dehydrogenase [NAD(P)+]"/>
    <property type="match status" value="1"/>
</dbReference>
<dbReference type="FunFam" id="3.40.50.720:FF:000019">
    <property type="entry name" value="Glycerol-3-phosphate dehydrogenase [NAD(P)+]"/>
    <property type="match status" value="1"/>
</dbReference>
<dbReference type="Gene3D" id="1.10.1040.10">
    <property type="entry name" value="N-(1-d-carboxylethyl)-l-norvaline Dehydrogenase, domain 2"/>
    <property type="match status" value="1"/>
</dbReference>
<dbReference type="Gene3D" id="3.40.50.720">
    <property type="entry name" value="NAD(P)-binding Rossmann-like Domain"/>
    <property type="match status" value="1"/>
</dbReference>
<dbReference type="HAMAP" id="MF_00394">
    <property type="entry name" value="NAD_Glyc3P_dehydrog"/>
    <property type="match status" value="1"/>
</dbReference>
<dbReference type="InterPro" id="IPR008927">
    <property type="entry name" value="6-PGluconate_DH-like_C_sf"/>
</dbReference>
<dbReference type="InterPro" id="IPR013328">
    <property type="entry name" value="6PGD_dom2"/>
</dbReference>
<dbReference type="InterPro" id="IPR006168">
    <property type="entry name" value="G3P_DH_NAD-dep"/>
</dbReference>
<dbReference type="InterPro" id="IPR006109">
    <property type="entry name" value="G3P_DH_NAD-dep_C"/>
</dbReference>
<dbReference type="InterPro" id="IPR011128">
    <property type="entry name" value="G3P_DH_NAD-dep_N"/>
</dbReference>
<dbReference type="InterPro" id="IPR036291">
    <property type="entry name" value="NAD(P)-bd_dom_sf"/>
</dbReference>
<dbReference type="NCBIfam" id="NF000940">
    <property type="entry name" value="PRK00094.1-2"/>
    <property type="match status" value="1"/>
</dbReference>
<dbReference type="NCBIfam" id="NF000942">
    <property type="entry name" value="PRK00094.1-4"/>
    <property type="match status" value="1"/>
</dbReference>
<dbReference type="PANTHER" id="PTHR11728">
    <property type="entry name" value="GLYCEROL-3-PHOSPHATE DEHYDROGENASE"/>
    <property type="match status" value="1"/>
</dbReference>
<dbReference type="PANTHER" id="PTHR11728:SF1">
    <property type="entry name" value="GLYCEROL-3-PHOSPHATE DEHYDROGENASE [NAD(+)] 2, CHLOROPLASTIC"/>
    <property type="match status" value="1"/>
</dbReference>
<dbReference type="Pfam" id="PF07479">
    <property type="entry name" value="NAD_Gly3P_dh_C"/>
    <property type="match status" value="1"/>
</dbReference>
<dbReference type="Pfam" id="PF01210">
    <property type="entry name" value="NAD_Gly3P_dh_N"/>
    <property type="match status" value="1"/>
</dbReference>
<dbReference type="PIRSF" id="PIRSF000114">
    <property type="entry name" value="Glycerol-3-P_dh"/>
    <property type="match status" value="1"/>
</dbReference>
<dbReference type="PRINTS" id="PR00077">
    <property type="entry name" value="GPDHDRGNASE"/>
</dbReference>
<dbReference type="SUPFAM" id="SSF48179">
    <property type="entry name" value="6-phosphogluconate dehydrogenase C-terminal domain-like"/>
    <property type="match status" value="1"/>
</dbReference>
<dbReference type="SUPFAM" id="SSF51735">
    <property type="entry name" value="NAD(P)-binding Rossmann-fold domains"/>
    <property type="match status" value="1"/>
</dbReference>
<dbReference type="PROSITE" id="PS00957">
    <property type="entry name" value="NAD_G3PDH"/>
    <property type="match status" value="1"/>
</dbReference>
<feature type="chain" id="PRO_0000137936" description="Glycerol-3-phosphate dehydrogenase [NAD(P)+]">
    <location>
        <begin position="1"/>
        <end position="332"/>
    </location>
</feature>
<feature type="active site" description="Proton acceptor" evidence="1">
    <location>
        <position position="192"/>
    </location>
</feature>
<feature type="binding site" evidence="1">
    <location>
        <position position="11"/>
    </location>
    <ligand>
        <name>NADPH</name>
        <dbReference type="ChEBI" id="CHEBI:57783"/>
    </ligand>
</feature>
<feature type="binding site" evidence="1">
    <location>
        <position position="30"/>
    </location>
    <ligand>
        <name>NADPH</name>
        <dbReference type="ChEBI" id="CHEBI:57783"/>
    </ligand>
</feature>
<feature type="binding site" evidence="1">
    <location>
        <position position="108"/>
    </location>
    <ligand>
        <name>NADPH</name>
        <dbReference type="ChEBI" id="CHEBI:57783"/>
    </ligand>
</feature>
<feature type="binding site" evidence="1">
    <location>
        <position position="108"/>
    </location>
    <ligand>
        <name>sn-glycerol 3-phosphate</name>
        <dbReference type="ChEBI" id="CHEBI:57597"/>
    </ligand>
</feature>
<feature type="binding site" evidence="1">
    <location>
        <position position="137"/>
    </location>
    <ligand>
        <name>sn-glycerol 3-phosphate</name>
        <dbReference type="ChEBI" id="CHEBI:57597"/>
    </ligand>
</feature>
<feature type="binding site" evidence="1">
    <location>
        <position position="139"/>
    </location>
    <ligand>
        <name>sn-glycerol 3-phosphate</name>
        <dbReference type="ChEBI" id="CHEBI:57597"/>
    </ligand>
</feature>
<feature type="binding site" evidence="1">
    <location>
        <position position="141"/>
    </location>
    <ligand>
        <name>NADPH</name>
        <dbReference type="ChEBI" id="CHEBI:57783"/>
    </ligand>
</feature>
<feature type="binding site" evidence="1">
    <location>
        <position position="192"/>
    </location>
    <ligand>
        <name>sn-glycerol 3-phosphate</name>
        <dbReference type="ChEBI" id="CHEBI:57597"/>
    </ligand>
</feature>
<feature type="binding site" evidence="1">
    <location>
        <position position="245"/>
    </location>
    <ligand>
        <name>sn-glycerol 3-phosphate</name>
        <dbReference type="ChEBI" id="CHEBI:57597"/>
    </ligand>
</feature>
<feature type="binding site" evidence="1">
    <location>
        <position position="255"/>
    </location>
    <ligand>
        <name>sn-glycerol 3-phosphate</name>
        <dbReference type="ChEBI" id="CHEBI:57597"/>
    </ligand>
</feature>
<feature type="binding site" evidence="1">
    <location>
        <position position="256"/>
    </location>
    <ligand>
        <name>NADPH</name>
        <dbReference type="ChEBI" id="CHEBI:57783"/>
    </ligand>
</feature>
<feature type="binding site" evidence="1">
    <location>
        <position position="256"/>
    </location>
    <ligand>
        <name>sn-glycerol 3-phosphate</name>
        <dbReference type="ChEBI" id="CHEBI:57597"/>
    </ligand>
</feature>
<feature type="binding site" evidence="1">
    <location>
        <position position="257"/>
    </location>
    <ligand>
        <name>sn-glycerol 3-phosphate</name>
        <dbReference type="ChEBI" id="CHEBI:57597"/>
    </ligand>
</feature>
<feature type="binding site" evidence="1">
    <location>
        <position position="280"/>
    </location>
    <ligand>
        <name>NADPH</name>
        <dbReference type="ChEBI" id="CHEBI:57783"/>
    </ligand>
</feature>
<feature type="binding site" evidence="1">
    <location>
        <position position="282"/>
    </location>
    <ligand>
        <name>NADPH</name>
        <dbReference type="ChEBI" id="CHEBI:57783"/>
    </ligand>
</feature>
<protein>
    <recommendedName>
        <fullName evidence="1">Glycerol-3-phosphate dehydrogenase [NAD(P)+]</fullName>
        <ecNumber evidence="1">1.1.1.94</ecNumber>
    </recommendedName>
    <alternativeName>
        <fullName evidence="1">NAD(P)(+)-dependent glycerol-3-phosphate dehydrogenase</fullName>
    </alternativeName>
    <alternativeName>
        <fullName evidence="1">NAD(P)H-dependent dihydroxyacetone-phosphate reductase</fullName>
    </alternativeName>
</protein>
<comment type="function">
    <text evidence="1">Catalyzes the reduction of the glycolytic intermediate dihydroxyacetone phosphate (DHAP) to sn-glycerol 3-phosphate (G3P), the key precursor for phospholipid synthesis.</text>
</comment>
<comment type="catalytic activity">
    <reaction evidence="1">
        <text>sn-glycerol 3-phosphate + NAD(+) = dihydroxyacetone phosphate + NADH + H(+)</text>
        <dbReference type="Rhea" id="RHEA:11092"/>
        <dbReference type="ChEBI" id="CHEBI:15378"/>
        <dbReference type="ChEBI" id="CHEBI:57540"/>
        <dbReference type="ChEBI" id="CHEBI:57597"/>
        <dbReference type="ChEBI" id="CHEBI:57642"/>
        <dbReference type="ChEBI" id="CHEBI:57945"/>
        <dbReference type="EC" id="1.1.1.94"/>
    </reaction>
    <physiologicalReaction direction="right-to-left" evidence="1">
        <dbReference type="Rhea" id="RHEA:11094"/>
    </physiologicalReaction>
</comment>
<comment type="catalytic activity">
    <reaction evidence="1">
        <text>sn-glycerol 3-phosphate + NADP(+) = dihydroxyacetone phosphate + NADPH + H(+)</text>
        <dbReference type="Rhea" id="RHEA:11096"/>
        <dbReference type="ChEBI" id="CHEBI:15378"/>
        <dbReference type="ChEBI" id="CHEBI:57597"/>
        <dbReference type="ChEBI" id="CHEBI:57642"/>
        <dbReference type="ChEBI" id="CHEBI:57783"/>
        <dbReference type="ChEBI" id="CHEBI:58349"/>
        <dbReference type="EC" id="1.1.1.94"/>
    </reaction>
    <physiologicalReaction direction="right-to-left" evidence="1">
        <dbReference type="Rhea" id="RHEA:11098"/>
    </physiologicalReaction>
</comment>
<comment type="pathway">
    <text evidence="1">Membrane lipid metabolism; glycerophospholipid metabolism.</text>
</comment>
<comment type="subcellular location">
    <subcellularLocation>
        <location evidence="1">Cytoplasm</location>
    </subcellularLocation>
</comment>
<comment type="similarity">
    <text evidence="1">Belongs to the NAD-dependent glycerol-3-phosphate dehydrogenase family.</text>
</comment>
<accession>Q62F47</accession>
<name>GPDA_BURMA</name>
<evidence type="ECO:0000255" key="1">
    <source>
        <dbReference type="HAMAP-Rule" id="MF_00394"/>
    </source>
</evidence>
<gene>
    <name evidence="1" type="primary">gpsA</name>
    <name type="ordered locus">BMA3204</name>
</gene>